<feature type="chain" id="PRO_1000071776" description="CinA-like protein">
    <location>
        <begin position="1"/>
        <end position="424"/>
    </location>
</feature>
<gene>
    <name type="ordered locus">Sfri_0186</name>
</gene>
<proteinExistence type="inferred from homology"/>
<comment type="similarity">
    <text evidence="1">Belongs to the CinA family.</text>
</comment>
<dbReference type="EMBL" id="CP000447">
    <property type="protein sequence ID" value="ABI70049.1"/>
    <property type="molecule type" value="Genomic_DNA"/>
</dbReference>
<dbReference type="RefSeq" id="WP_011635676.1">
    <property type="nucleotide sequence ID" value="NC_008345.1"/>
</dbReference>
<dbReference type="SMR" id="Q089L6"/>
<dbReference type="STRING" id="318167.Sfri_0186"/>
<dbReference type="KEGG" id="sfr:Sfri_0186"/>
<dbReference type="eggNOG" id="COG1058">
    <property type="taxonomic scope" value="Bacteria"/>
</dbReference>
<dbReference type="eggNOG" id="COG1546">
    <property type="taxonomic scope" value="Bacteria"/>
</dbReference>
<dbReference type="HOGENOM" id="CLU_030805_9_2_6"/>
<dbReference type="OrthoDB" id="9801454at2"/>
<dbReference type="Proteomes" id="UP000000684">
    <property type="component" value="Chromosome"/>
</dbReference>
<dbReference type="CDD" id="cd00885">
    <property type="entry name" value="cinA"/>
    <property type="match status" value="1"/>
</dbReference>
<dbReference type="Gene3D" id="3.90.950.20">
    <property type="entry name" value="CinA-like"/>
    <property type="match status" value="1"/>
</dbReference>
<dbReference type="Gene3D" id="3.40.980.10">
    <property type="entry name" value="MoaB/Mog-like domain"/>
    <property type="match status" value="1"/>
</dbReference>
<dbReference type="HAMAP" id="MF_00226_B">
    <property type="entry name" value="CinA_B"/>
    <property type="match status" value="1"/>
</dbReference>
<dbReference type="InterPro" id="IPR050101">
    <property type="entry name" value="CinA"/>
</dbReference>
<dbReference type="InterPro" id="IPR036653">
    <property type="entry name" value="CinA-like_C"/>
</dbReference>
<dbReference type="InterPro" id="IPR008136">
    <property type="entry name" value="CinA_C"/>
</dbReference>
<dbReference type="InterPro" id="IPR008135">
    <property type="entry name" value="Competence-induced_CinA"/>
</dbReference>
<dbReference type="InterPro" id="IPR036425">
    <property type="entry name" value="MoaB/Mog-like_dom_sf"/>
</dbReference>
<dbReference type="InterPro" id="IPR001453">
    <property type="entry name" value="MoaB/Mog_dom"/>
</dbReference>
<dbReference type="NCBIfam" id="TIGR00200">
    <property type="entry name" value="cinA_nterm"/>
    <property type="match status" value="1"/>
</dbReference>
<dbReference type="NCBIfam" id="TIGR00177">
    <property type="entry name" value="molyb_syn"/>
    <property type="match status" value="1"/>
</dbReference>
<dbReference type="NCBIfam" id="TIGR00199">
    <property type="entry name" value="PncC_domain"/>
    <property type="match status" value="1"/>
</dbReference>
<dbReference type="PANTHER" id="PTHR13939">
    <property type="entry name" value="NICOTINAMIDE-NUCLEOTIDE AMIDOHYDROLASE PNCC"/>
    <property type="match status" value="1"/>
</dbReference>
<dbReference type="PANTHER" id="PTHR13939:SF0">
    <property type="entry name" value="NMN AMIDOHYDROLASE-LIKE PROTEIN YFAY"/>
    <property type="match status" value="1"/>
</dbReference>
<dbReference type="Pfam" id="PF02464">
    <property type="entry name" value="CinA"/>
    <property type="match status" value="1"/>
</dbReference>
<dbReference type="Pfam" id="PF00994">
    <property type="entry name" value="MoCF_biosynth"/>
    <property type="match status" value="1"/>
</dbReference>
<dbReference type="PIRSF" id="PIRSF006728">
    <property type="entry name" value="CinA"/>
    <property type="match status" value="1"/>
</dbReference>
<dbReference type="SMART" id="SM00852">
    <property type="entry name" value="MoCF_biosynth"/>
    <property type="match status" value="1"/>
</dbReference>
<dbReference type="SUPFAM" id="SSF142433">
    <property type="entry name" value="CinA-like"/>
    <property type="match status" value="1"/>
</dbReference>
<dbReference type="SUPFAM" id="SSF53218">
    <property type="entry name" value="Molybdenum cofactor biosynthesis proteins"/>
    <property type="match status" value="1"/>
</dbReference>
<name>CINAL_SHEFN</name>
<organism>
    <name type="scientific">Shewanella frigidimarina (strain NCIMB 400)</name>
    <dbReference type="NCBI Taxonomy" id="318167"/>
    <lineage>
        <taxon>Bacteria</taxon>
        <taxon>Pseudomonadati</taxon>
        <taxon>Pseudomonadota</taxon>
        <taxon>Gammaproteobacteria</taxon>
        <taxon>Alteromonadales</taxon>
        <taxon>Shewanellaceae</taxon>
        <taxon>Shewanella</taxon>
    </lineage>
</organism>
<evidence type="ECO:0000255" key="1">
    <source>
        <dbReference type="HAMAP-Rule" id="MF_00226"/>
    </source>
</evidence>
<reference key="1">
    <citation type="submission" date="2006-08" db="EMBL/GenBank/DDBJ databases">
        <title>Complete sequence of Shewanella frigidimarina NCIMB 400.</title>
        <authorList>
            <consortium name="US DOE Joint Genome Institute"/>
            <person name="Copeland A."/>
            <person name="Lucas S."/>
            <person name="Lapidus A."/>
            <person name="Barry K."/>
            <person name="Detter J.C."/>
            <person name="Glavina del Rio T."/>
            <person name="Hammon N."/>
            <person name="Israni S."/>
            <person name="Dalin E."/>
            <person name="Tice H."/>
            <person name="Pitluck S."/>
            <person name="Fredrickson J.K."/>
            <person name="Kolker E."/>
            <person name="McCuel L.A."/>
            <person name="DiChristina T."/>
            <person name="Nealson K.H."/>
            <person name="Newman D."/>
            <person name="Tiedje J.M."/>
            <person name="Zhou J."/>
            <person name="Romine M.F."/>
            <person name="Culley D.E."/>
            <person name="Serres M."/>
            <person name="Chertkov O."/>
            <person name="Brettin T."/>
            <person name="Bruce D."/>
            <person name="Han C."/>
            <person name="Tapia R."/>
            <person name="Gilna P."/>
            <person name="Schmutz J."/>
            <person name="Larimer F."/>
            <person name="Land M."/>
            <person name="Hauser L."/>
            <person name="Kyrpides N."/>
            <person name="Mikhailova N."/>
            <person name="Richardson P."/>
        </authorList>
    </citation>
    <scope>NUCLEOTIDE SEQUENCE [LARGE SCALE GENOMIC DNA]</scope>
    <source>
        <strain>NCIMB 400</strain>
    </source>
</reference>
<keyword id="KW-1185">Reference proteome</keyword>
<protein>
    <recommendedName>
        <fullName evidence="1">CinA-like protein</fullName>
    </recommendedName>
</protein>
<sequence length="424" mass="46088">MKLEMICTGEEVLSGQIVDTNAAWVANTLMELGIEMQHRVTVGDRMDDLVAAFQERSKHADVIIVNGGLGPTSDDMSALAMAKAKGEELVENVQWREHLEDWFTRNNRVMAKSNLKQAWLPASAVMVDNPVGTACGFRVKLNNAWLFFTPGVPFELKHMVTEQFIPFITEEFGVQEKSALEKLLTIGHGESSLADTLSEITLPAGIELGYRSSMPHIEIKIFARGDKAIRQLPDVTKQVKALLGCAVVAENRPTLAAEIHHRLYQSGFSLSVAESCTGGMITSQLIDFAGSSSYLHHGLVTYSNESKVKVLGVNPQILDDHGAVSIPTVEAMAQGVRGILDSDFALATSGIAGPDGGSDDKPVGTVAIALATKHGVYSQMVKLPKRSRQLVRSMSTAIAYDMLRRALLEEAVIVDYPSIPRFAK</sequence>
<accession>Q089L6</accession>